<name>PTH_BURP6</name>
<reference key="1">
    <citation type="journal article" date="2010" name="Genome Biol. Evol.">
        <title>Continuing evolution of Burkholderia mallei through genome reduction and large-scale rearrangements.</title>
        <authorList>
            <person name="Losada L."/>
            <person name="Ronning C.M."/>
            <person name="DeShazer D."/>
            <person name="Woods D."/>
            <person name="Fedorova N."/>
            <person name="Kim H.S."/>
            <person name="Shabalina S.A."/>
            <person name="Pearson T.R."/>
            <person name="Brinkac L."/>
            <person name="Tan P."/>
            <person name="Nandi T."/>
            <person name="Crabtree J."/>
            <person name="Badger J."/>
            <person name="Beckstrom-Sternberg S."/>
            <person name="Saqib M."/>
            <person name="Schutzer S.E."/>
            <person name="Keim P."/>
            <person name="Nierman W.C."/>
        </authorList>
    </citation>
    <scope>NUCLEOTIDE SEQUENCE [LARGE SCALE GENOMIC DNA]</scope>
    <source>
        <strain>668</strain>
    </source>
</reference>
<comment type="function">
    <text evidence="1">Hydrolyzes ribosome-free peptidyl-tRNAs (with 1 or more amino acids incorporated), which drop off the ribosome during protein synthesis, or as a result of ribosome stalling.</text>
</comment>
<comment type="function">
    <text evidence="1">Catalyzes the release of premature peptidyl moieties from peptidyl-tRNA molecules trapped in stalled 50S ribosomal subunits, and thus maintains levels of free tRNAs and 50S ribosomes.</text>
</comment>
<comment type="catalytic activity">
    <reaction evidence="1">
        <text>an N-acyl-L-alpha-aminoacyl-tRNA + H2O = an N-acyl-L-amino acid + a tRNA + H(+)</text>
        <dbReference type="Rhea" id="RHEA:54448"/>
        <dbReference type="Rhea" id="RHEA-COMP:10123"/>
        <dbReference type="Rhea" id="RHEA-COMP:13883"/>
        <dbReference type="ChEBI" id="CHEBI:15377"/>
        <dbReference type="ChEBI" id="CHEBI:15378"/>
        <dbReference type="ChEBI" id="CHEBI:59874"/>
        <dbReference type="ChEBI" id="CHEBI:78442"/>
        <dbReference type="ChEBI" id="CHEBI:138191"/>
        <dbReference type="EC" id="3.1.1.29"/>
    </reaction>
</comment>
<comment type="subunit">
    <text evidence="1">Monomer.</text>
</comment>
<comment type="subcellular location">
    <subcellularLocation>
        <location evidence="1">Cytoplasm</location>
    </subcellularLocation>
</comment>
<comment type="similarity">
    <text evidence="1">Belongs to the PTH family.</text>
</comment>
<gene>
    <name evidence="1" type="primary">pth</name>
    <name type="ordered locus">BURPS668_0567</name>
</gene>
<feature type="chain" id="PRO_1000010575" description="Peptidyl-tRNA hydrolase">
    <location>
        <begin position="1"/>
        <end position="201"/>
    </location>
</feature>
<feature type="active site" description="Proton acceptor" evidence="1">
    <location>
        <position position="20"/>
    </location>
</feature>
<feature type="binding site" evidence="1">
    <location>
        <position position="15"/>
    </location>
    <ligand>
        <name>tRNA</name>
        <dbReference type="ChEBI" id="CHEBI:17843"/>
    </ligand>
</feature>
<feature type="binding site" evidence="1">
    <location>
        <position position="66"/>
    </location>
    <ligand>
        <name>tRNA</name>
        <dbReference type="ChEBI" id="CHEBI:17843"/>
    </ligand>
</feature>
<feature type="binding site" evidence="1">
    <location>
        <position position="68"/>
    </location>
    <ligand>
        <name>tRNA</name>
        <dbReference type="ChEBI" id="CHEBI:17843"/>
    </ligand>
</feature>
<feature type="binding site" evidence="1">
    <location>
        <position position="114"/>
    </location>
    <ligand>
        <name>tRNA</name>
        <dbReference type="ChEBI" id="CHEBI:17843"/>
    </ligand>
</feature>
<feature type="site" description="Discriminates between blocked and unblocked aminoacyl-tRNA" evidence="1">
    <location>
        <position position="10"/>
    </location>
</feature>
<feature type="site" description="Stabilizes the basic form of H active site to accept a proton" evidence="1">
    <location>
        <position position="93"/>
    </location>
</feature>
<dbReference type="EC" id="3.1.1.29" evidence="1"/>
<dbReference type="EMBL" id="CP000570">
    <property type="protein sequence ID" value="ABN82059.1"/>
    <property type="molecule type" value="Genomic_DNA"/>
</dbReference>
<dbReference type="RefSeq" id="WP_004202941.1">
    <property type="nucleotide sequence ID" value="NC_009074.1"/>
</dbReference>
<dbReference type="SMR" id="A3N5J9"/>
<dbReference type="GeneID" id="93059040"/>
<dbReference type="KEGG" id="bpd:BURPS668_0567"/>
<dbReference type="HOGENOM" id="CLU_062456_3_1_4"/>
<dbReference type="GO" id="GO:0005737">
    <property type="term" value="C:cytoplasm"/>
    <property type="evidence" value="ECO:0007669"/>
    <property type="project" value="UniProtKB-SubCell"/>
</dbReference>
<dbReference type="GO" id="GO:0004045">
    <property type="term" value="F:peptidyl-tRNA hydrolase activity"/>
    <property type="evidence" value="ECO:0007669"/>
    <property type="project" value="UniProtKB-UniRule"/>
</dbReference>
<dbReference type="GO" id="GO:0000049">
    <property type="term" value="F:tRNA binding"/>
    <property type="evidence" value="ECO:0007669"/>
    <property type="project" value="UniProtKB-UniRule"/>
</dbReference>
<dbReference type="GO" id="GO:0006515">
    <property type="term" value="P:protein quality control for misfolded or incompletely synthesized proteins"/>
    <property type="evidence" value="ECO:0007669"/>
    <property type="project" value="UniProtKB-UniRule"/>
</dbReference>
<dbReference type="GO" id="GO:0072344">
    <property type="term" value="P:rescue of stalled ribosome"/>
    <property type="evidence" value="ECO:0007669"/>
    <property type="project" value="UniProtKB-UniRule"/>
</dbReference>
<dbReference type="CDD" id="cd00462">
    <property type="entry name" value="PTH"/>
    <property type="match status" value="1"/>
</dbReference>
<dbReference type="FunFam" id="3.40.50.1470:FF:000001">
    <property type="entry name" value="Peptidyl-tRNA hydrolase"/>
    <property type="match status" value="1"/>
</dbReference>
<dbReference type="Gene3D" id="3.40.50.1470">
    <property type="entry name" value="Peptidyl-tRNA hydrolase"/>
    <property type="match status" value="1"/>
</dbReference>
<dbReference type="HAMAP" id="MF_00083">
    <property type="entry name" value="Pept_tRNA_hydro_bact"/>
    <property type="match status" value="1"/>
</dbReference>
<dbReference type="InterPro" id="IPR001328">
    <property type="entry name" value="Pept_tRNA_hydro"/>
</dbReference>
<dbReference type="InterPro" id="IPR018171">
    <property type="entry name" value="Pept_tRNA_hydro_CS"/>
</dbReference>
<dbReference type="InterPro" id="IPR036416">
    <property type="entry name" value="Pept_tRNA_hydro_sf"/>
</dbReference>
<dbReference type="NCBIfam" id="TIGR00447">
    <property type="entry name" value="pth"/>
    <property type="match status" value="1"/>
</dbReference>
<dbReference type="PANTHER" id="PTHR17224">
    <property type="entry name" value="PEPTIDYL-TRNA HYDROLASE"/>
    <property type="match status" value="1"/>
</dbReference>
<dbReference type="PANTHER" id="PTHR17224:SF1">
    <property type="entry name" value="PEPTIDYL-TRNA HYDROLASE"/>
    <property type="match status" value="1"/>
</dbReference>
<dbReference type="Pfam" id="PF01195">
    <property type="entry name" value="Pept_tRNA_hydro"/>
    <property type="match status" value="1"/>
</dbReference>
<dbReference type="SUPFAM" id="SSF53178">
    <property type="entry name" value="Peptidyl-tRNA hydrolase-like"/>
    <property type="match status" value="1"/>
</dbReference>
<dbReference type="PROSITE" id="PS01195">
    <property type="entry name" value="PEPT_TRNA_HYDROL_1"/>
    <property type="match status" value="1"/>
</dbReference>
<dbReference type="PROSITE" id="PS01196">
    <property type="entry name" value="PEPT_TRNA_HYDROL_2"/>
    <property type="match status" value="1"/>
</dbReference>
<evidence type="ECO:0000255" key="1">
    <source>
        <dbReference type="HAMAP-Rule" id="MF_00083"/>
    </source>
</evidence>
<proteinExistence type="inferred from homology"/>
<accession>A3N5J9</accession>
<sequence>MIKLIVGLGNPGAEYTATRHNAGFWLVDQLAREAGATLRDERRFHGFYAKARLFGEEVHLLEPQTYMNRSGQAVVALAHFFKILPTEILVAHDELDLPPGAAKLKLGGGSGGHNGLKDISAHLSSQQYWRLRIGIGHPRDLIPESARAGAKPDVANFVLKPPRKDEQDLIDAAIERALAVMPTAIKGETERAMMQLHRNGA</sequence>
<organism>
    <name type="scientific">Burkholderia pseudomallei (strain 668)</name>
    <dbReference type="NCBI Taxonomy" id="320373"/>
    <lineage>
        <taxon>Bacteria</taxon>
        <taxon>Pseudomonadati</taxon>
        <taxon>Pseudomonadota</taxon>
        <taxon>Betaproteobacteria</taxon>
        <taxon>Burkholderiales</taxon>
        <taxon>Burkholderiaceae</taxon>
        <taxon>Burkholderia</taxon>
        <taxon>pseudomallei group</taxon>
    </lineage>
</organism>
<protein>
    <recommendedName>
        <fullName evidence="1">Peptidyl-tRNA hydrolase</fullName>
        <shortName evidence="1">Pth</shortName>
        <ecNumber evidence="1">3.1.1.29</ecNumber>
    </recommendedName>
</protein>
<keyword id="KW-0963">Cytoplasm</keyword>
<keyword id="KW-0378">Hydrolase</keyword>
<keyword id="KW-0694">RNA-binding</keyword>
<keyword id="KW-0820">tRNA-binding</keyword>